<organism>
    <name type="scientific">Burkholderia cenocepacia (strain HI2424)</name>
    <dbReference type="NCBI Taxonomy" id="331272"/>
    <lineage>
        <taxon>Bacteria</taxon>
        <taxon>Pseudomonadati</taxon>
        <taxon>Pseudomonadota</taxon>
        <taxon>Betaproteobacteria</taxon>
        <taxon>Burkholderiales</taxon>
        <taxon>Burkholderiaceae</taxon>
        <taxon>Burkholderia</taxon>
        <taxon>Burkholderia cepacia complex</taxon>
    </lineage>
</organism>
<evidence type="ECO:0000255" key="1">
    <source>
        <dbReference type="HAMAP-Rule" id="MF_01719"/>
    </source>
</evidence>
<protein>
    <recommendedName>
        <fullName evidence="1">Methionine import ATP-binding protein MetN 2</fullName>
        <ecNumber evidence="1">7.4.2.11</ecNumber>
    </recommendedName>
</protein>
<accession>A0B344</accession>
<gene>
    <name evidence="1" type="primary">metN2</name>
    <name type="ordered locus">Bcen2424_5337</name>
</gene>
<sequence length="394" mass="41269">MTQLFDTLGFIEASAVRAGAGADAVAHEEAVTPVGGAAVSLEQVGKVFATPRGQAAALRDVTLDVRRGEVFGIIGRSGAGKSTLLRLLNGLERPSSGRVRVQGVDVGALDEDGLVALRRRTGMVFQHFNLLSAKTVFENVALPLKIAGVPKAERVRKVEALLELVGLAAKRDAYPASLSGGQKQRVGIARALVHDPEVLLCDEATSALDPETTQSILALLADINRRLGLTIVLITHEMEVIRAVCDTVAVIEQGEVVETGPVWRVFGDPRHGATRALLSTLQHDLPAELAARVRPLPEQAALPDGAQIVLDVRYTGESGGEPDVGALAAALGGSVRFLHGGIESIQGHAQGRLVIAATPRADDAGPSTARGGAVAALLERARRHANHAEVLGYV</sequence>
<name>METN2_BURCH</name>
<keyword id="KW-0029">Amino-acid transport</keyword>
<keyword id="KW-0067">ATP-binding</keyword>
<keyword id="KW-0997">Cell inner membrane</keyword>
<keyword id="KW-1003">Cell membrane</keyword>
<keyword id="KW-0472">Membrane</keyword>
<keyword id="KW-0547">Nucleotide-binding</keyword>
<keyword id="KW-1278">Translocase</keyword>
<keyword id="KW-0813">Transport</keyword>
<dbReference type="EC" id="7.4.2.11" evidence="1"/>
<dbReference type="EMBL" id="CP000459">
    <property type="protein sequence ID" value="ABK12070.1"/>
    <property type="molecule type" value="Genomic_DNA"/>
</dbReference>
<dbReference type="RefSeq" id="WP_011546864.1">
    <property type="nucleotide sequence ID" value="NC_008543.1"/>
</dbReference>
<dbReference type="SMR" id="A0B344"/>
<dbReference type="KEGG" id="bch:Bcen2424_5337"/>
<dbReference type="HOGENOM" id="CLU_000604_1_3_4"/>
<dbReference type="GO" id="GO:0005886">
    <property type="term" value="C:plasma membrane"/>
    <property type="evidence" value="ECO:0007669"/>
    <property type="project" value="UniProtKB-SubCell"/>
</dbReference>
<dbReference type="GO" id="GO:0033232">
    <property type="term" value="F:ABC-type D-methionine transporter activity"/>
    <property type="evidence" value="ECO:0007669"/>
    <property type="project" value="UniProtKB-EC"/>
</dbReference>
<dbReference type="GO" id="GO:0005524">
    <property type="term" value="F:ATP binding"/>
    <property type="evidence" value="ECO:0007669"/>
    <property type="project" value="UniProtKB-KW"/>
</dbReference>
<dbReference type="GO" id="GO:0016887">
    <property type="term" value="F:ATP hydrolysis activity"/>
    <property type="evidence" value="ECO:0007669"/>
    <property type="project" value="InterPro"/>
</dbReference>
<dbReference type="CDD" id="cd03258">
    <property type="entry name" value="ABC_MetN_methionine_transporter"/>
    <property type="match status" value="1"/>
</dbReference>
<dbReference type="FunFam" id="3.40.50.300:FF:000056">
    <property type="entry name" value="Cell division ATP-binding protein FtsE"/>
    <property type="match status" value="1"/>
</dbReference>
<dbReference type="Gene3D" id="3.30.70.260">
    <property type="match status" value="1"/>
</dbReference>
<dbReference type="Gene3D" id="3.40.50.300">
    <property type="entry name" value="P-loop containing nucleotide triphosphate hydrolases"/>
    <property type="match status" value="1"/>
</dbReference>
<dbReference type="InterPro" id="IPR003593">
    <property type="entry name" value="AAA+_ATPase"/>
</dbReference>
<dbReference type="InterPro" id="IPR003439">
    <property type="entry name" value="ABC_transporter-like_ATP-bd"/>
</dbReference>
<dbReference type="InterPro" id="IPR017871">
    <property type="entry name" value="ABC_transporter-like_CS"/>
</dbReference>
<dbReference type="InterPro" id="IPR045865">
    <property type="entry name" value="ACT-like_dom_sf"/>
</dbReference>
<dbReference type="InterPro" id="IPR041701">
    <property type="entry name" value="MetN_ABC"/>
</dbReference>
<dbReference type="InterPro" id="IPR050086">
    <property type="entry name" value="MetN_ABC_transporter-like"/>
</dbReference>
<dbReference type="InterPro" id="IPR018449">
    <property type="entry name" value="NIL_domain"/>
</dbReference>
<dbReference type="InterPro" id="IPR027417">
    <property type="entry name" value="P-loop_NTPase"/>
</dbReference>
<dbReference type="PANTHER" id="PTHR43166">
    <property type="entry name" value="AMINO ACID IMPORT ATP-BINDING PROTEIN"/>
    <property type="match status" value="1"/>
</dbReference>
<dbReference type="PANTHER" id="PTHR43166:SF30">
    <property type="entry name" value="METHIONINE IMPORT ATP-BINDING PROTEIN METN"/>
    <property type="match status" value="1"/>
</dbReference>
<dbReference type="Pfam" id="PF00005">
    <property type="entry name" value="ABC_tran"/>
    <property type="match status" value="1"/>
</dbReference>
<dbReference type="Pfam" id="PF09383">
    <property type="entry name" value="NIL"/>
    <property type="match status" value="1"/>
</dbReference>
<dbReference type="SMART" id="SM00382">
    <property type="entry name" value="AAA"/>
    <property type="match status" value="1"/>
</dbReference>
<dbReference type="SMART" id="SM00930">
    <property type="entry name" value="NIL"/>
    <property type="match status" value="1"/>
</dbReference>
<dbReference type="SUPFAM" id="SSF55021">
    <property type="entry name" value="ACT-like"/>
    <property type="match status" value="1"/>
</dbReference>
<dbReference type="SUPFAM" id="SSF52540">
    <property type="entry name" value="P-loop containing nucleoside triphosphate hydrolases"/>
    <property type="match status" value="1"/>
</dbReference>
<dbReference type="PROSITE" id="PS00211">
    <property type="entry name" value="ABC_TRANSPORTER_1"/>
    <property type="match status" value="1"/>
</dbReference>
<dbReference type="PROSITE" id="PS50893">
    <property type="entry name" value="ABC_TRANSPORTER_2"/>
    <property type="match status" value="1"/>
</dbReference>
<dbReference type="PROSITE" id="PS51264">
    <property type="entry name" value="METN"/>
    <property type="match status" value="1"/>
</dbReference>
<comment type="function">
    <text evidence="1">Part of the ABC transporter complex MetNIQ involved in methionine import. Responsible for energy coupling to the transport system.</text>
</comment>
<comment type="catalytic activity">
    <reaction evidence="1">
        <text>L-methionine(out) + ATP + H2O = L-methionine(in) + ADP + phosphate + H(+)</text>
        <dbReference type="Rhea" id="RHEA:29779"/>
        <dbReference type="ChEBI" id="CHEBI:15377"/>
        <dbReference type="ChEBI" id="CHEBI:15378"/>
        <dbReference type="ChEBI" id="CHEBI:30616"/>
        <dbReference type="ChEBI" id="CHEBI:43474"/>
        <dbReference type="ChEBI" id="CHEBI:57844"/>
        <dbReference type="ChEBI" id="CHEBI:456216"/>
        <dbReference type="EC" id="7.4.2.11"/>
    </reaction>
</comment>
<comment type="catalytic activity">
    <reaction evidence="1">
        <text>D-methionine(out) + ATP + H2O = D-methionine(in) + ADP + phosphate + H(+)</text>
        <dbReference type="Rhea" id="RHEA:29767"/>
        <dbReference type="ChEBI" id="CHEBI:15377"/>
        <dbReference type="ChEBI" id="CHEBI:15378"/>
        <dbReference type="ChEBI" id="CHEBI:30616"/>
        <dbReference type="ChEBI" id="CHEBI:43474"/>
        <dbReference type="ChEBI" id="CHEBI:57932"/>
        <dbReference type="ChEBI" id="CHEBI:456216"/>
        <dbReference type="EC" id="7.4.2.11"/>
    </reaction>
</comment>
<comment type="subunit">
    <text evidence="1">The complex is composed of two ATP-binding proteins (MetN), two transmembrane proteins (MetI) and a solute-binding protein (MetQ).</text>
</comment>
<comment type="subcellular location">
    <subcellularLocation>
        <location evidence="1">Cell inner membrane</location>
        <topology evidence="1">Peripheral membrane protein</topology>
    </subcellularLocation>
</comment>
<comment type="similarity">
    <text evidence="1">Belongs to the ABC transporter superfamily. Methionine importer (TC 3.A.1.24) family.</text>
</comment>
<proteinExistence type="inferred from homology"/>
<reference key="1">
    <citation type="submission" date="2006-08" db="EMBL/GenBank/DDBJ databases">
        <title>Complete sequence of chromosome 2 of Burkholderia cenocepacia HI2424.</title>
        <authorList>
            <person name="Copeland A."/>
            <person name="Lucas S."/>
            <person name="Lapidus A."/>
            <person name="Barry K."/>
            <person name="Detter J.C."/>
            <person name="Glavina del Rio T."/>
            <person name="Hammon N."/>
            <person name="Israni S."/>
            <person name="Pitluck S."/>
            <person name="Chain P."/>
            <person name="Malfatti S."/>
            <person name="Shin M."/>
            <person name="Vergez L."/>
            <person name="Schmutz J."/>
            <person name="Larimer F."/>
            <person name="Land M."/>
            <person name="Hauser L."/>
            <person name="Kyrpides N."/>
            <person name="Kim E."/>
            <person name="LiPuma J.J."/>
            <person name="Gonzalez C.F."/>
            <person name="Konstantinidis K."/>
            <person name="Tiedje J.M."/>
            <person name="Richardson P."/>
        </authorList>
    </citation>
    <scope>NUCLEOTIDE SEQUENCE [LARGE SCALE GENOMIC DNA]</scope>
    <source>
        <strain>HI2424</strain>
    </source>
</reference>
<feature type="chain" id="PRO_0000277677" description="Methionine import ATP-binding protein MetN 2">
    <location>
        <begin position="1"/>
        <end position="394"/>
    </location>
</feature>
<feature type="domain" description="ABC transporter" evidence="1">
    <location>
        <begin position="39"/>
        <end position="278"/>
    </location>
</feature>
<feature type="binding site" evidence="1">
    <location>
        <begin position="75"/>
        <end position="82"/>
    </location>
    <ligand>
        <name>ATP</name>
        <dbReference type="ChEBI" id="CHEBI:30616"/>
    </ligand>
</feature>